<proteinExistence type="inferred from homology"/>
<comment type="catalytic activity">
    <reaction evidence="1">
        <text>2 reduced [2Fe-2S]-[ferredoxin] + NADP(+) + H(+) = 2 oxidized [2Fe-2S]-[ferredoxin] + NADPH</text>
        <dbReference type="Rhea" id="RHEA:20125"/>
        <dbReference type="Rhea" id="RHEA-COMP:10000"/>
        <dbReference type="Rhea" id="RHEA-COMP:10001"/>
        <dbReference type="ChEBI" id="CHEBI:15378"/>
        <dbReference type="ChEBI" id="CHEBI:33737"/>
        <dbReference type="ChEBI" id="CHEBI:33738"/>
        <dbReference type="ChEBI" id="CHEBI:57783"/>
        <dbReference type="ChEBI" id="CHEBI:58349"/>
        <dbReference type="EC" id="1.18.1.2"/>
    </reaction>
</comment>
<comment type="cofactor">
    <cofactor evidence="1">
        <name>FAD</name>
        <dbReference type="ChEBI" id="CHEBI:57692"/>
    </cofactor>
    <text evidence="1">Binds 1 FAD per subunit.</text>
</comment>
<comment type="subunit">
    <text evidence="1">Homodimer.</text>
</comment>
<comment type="similarity">
    <text evidence="1">Belongs to the ferredoxin--NADP reductase type 2 family.</text>
</comment>
<feature type="chain" id="PRO_0000364869" description="Ferredoxin--NADP reductase 1">
    <location>
        <begin position="1"/>
        <end position="332"/>
    </location>
</feature>
<feature type="binding site" evidence="1">
    <location>
        <position position="35"/>
    </location>
    <ligand>
        <name>FAD</name>
        <dbReference type="ChEBI" id="CHEBI:57692"/>
    </ligand>
</feature>
<feature type="binding site" evidence="1">
    <location>
        <position position="43"/>
    </location>
    <ligand>
        <name>FAD</name>
        <dbReference type="ChEBI" id="CHEBI:57692"/>
    </ligand>
</feature>
<feature type="binding site" evidence="1">
    <location>
        <position position="48"/>
    </location>
    <ligand>
        <name>FAD</name>
        <dbReference type="ChEBI" id="CHEBI:57692"/>
    </ligand>
</feature>
<feature type="binding site" evidence="1">
    <location>
        <position position="88"/>
    </location>
    <ligand>
        <name>FAD</name>
        <dbReference type="ChEBI" id="CHEBI:57692"/>
    </ligand>
</feature>
<feature type="binding site" evidence="1">
    <location>
        <position position="123"/>
    </location>
    <ligand>
        <name>FAD</name>
        <dbReference type="ChEBI" id="CHEBI:57692"/>
    </ligand>
</feature>
<feature type="binding site" evidence="1">
    <location>
        <position position="284"/>
    </location>
    <ligand>
        <name>FAD</name>
        <dbReference type="ChEBI" id="CHEBI:57692"/>
    </ligand>
</feature>
<feature type="binding site" evidence="1">
    <location>
        <position position="325"/>
    </location>
    <ligand>
        <name>FAD</name>
        <dbReference type="ChEBI" id="CHEBI:57692"/>
    </ligand>
</feature>
<organism>
    <name type="scientific">Listeria innocua serovar 6a (strain ATCC BAA-680 / CLIP 11262)</name>
    <dbReference type="NCBI Taxonomy" id="272626"/>
    <lineage>
        <taxon>Bacteria</taxon>
        <taxon>Bacillati</taxon>
        <taxon>Bacillota</taxon>
        <taxon>Bacilli</taxon>
        <taxon>Bacillales</taxon>
        <taxon>Listeriaceae</taxon>
        <taxon>Listeria</taxon>
    </lineage>
</organism>
<keyword id="KW-0274">FAD</keyword>
<keyword id="KW-0285">Flavoprotein</keyword>
<keyword id="KW-0521">NADP</keyword>
<keyword id="KW-0560">Oxidoreductase</keyword>
<accession>Q92A47</accession>
<evidence type="ECO:0000255" key="1">
    <source>
        <dbReference type="HAMAP-Rule" id="MF_01685"/>
    </source>
</evidence>
<gene>
    <name type="ordered locus">lin2075</name>
</gene>
<reference key="1">
    <citation type="journal article" date="2001" name="Science">
        <title>Comparative genomics of Listeria species.</title>
        <authorList>
            <person name="Glaser P."/>
            <person name="Frangeul L."/>
            <person name="Buchrieser C."/>
            <person name="Rusniok C."/>
            <person name="Amend A."/>
            <person name="Baquero F."/>
            <person name="Berche P."/>
            <person name="Bloecker H."/>
            <person name="Brandt P."/>
            <person name="Chakraborty T."/>
            <person name="Charbit A."/>
            <person name="Chetouani F."/>
            <person name="Couve E."/>
            <person name="de Daruvar A."/>
            <person name="Dehoux P."/>
            <person name="Domann E."/>
            <person name="Dominguez-Bernal G."/>
            <person name="Duchaud E."/>
            <person name="Durant L."/>
            <person name="Dussurget O."/>
            <person name="Entian K.-D."/>
            <person name="Fsihi H."/>
            <person name="Garcia-del Portillo F."/>
            <person name="Garrido P."/>
            <person name="Gautier L."/>
            <person name="Goebel W."/>
            <person name="Gomez-Lopez N."/>
            <person name="Hain T."/>
            <person name="Hauf J."/>
            <person name="Jackson D."/>
            <person name="Jones L.-M."/>
            <person name="Kaerst U."/>
            <person name="Kreft J."/>
            <person name="Kuhn M."/>
            <person name="Kunst F."/>
            <person name="Kurapkat G."/>
            <person name="Madueno E."/>
            <person name="Maitournam A."/>
            <person name="Mata Vicente J."/>
            <person name="Ng E."/>
            <person name="Nedjari H."/>
            <person name="Nordsiek G."/>
            <person name="Novella S."/>
            <person name="de Pablos B."/>
            <person name="Perez-Diaz J.-C."/>
            <person name="Purcell R."/>
            <person name="Remmel B."/>
            <person name="Rose M."/>
            <person name="Schlueter T."/>
            <person name="Simoes N."/>
            <person name="Tierrez A."/>
            <person name="Vazquez-Boland J.-A."/>
            <person name="Voss H."/>
            <person name="Wehland J."/>
            <person name="Cossart P."/>
        </authorList>
    </citation>
    <scope>NUCLEOTIDE SEQUENCE [LARGE SCALE GENOMIC DNA]</scope>
    <source>
        <strain>ATCC BAA-680 / CLIP 11262</strain>
    </source>
</reference>
<dbReference type="EC" id="1.18.1.2" evidence="1"/>
<dbReference type="EMBL" id="AL596170">
    <property type="protein sequence ID" value="CAC97305.1"/>
    <property type="molecule type" value="Genomic_DNA"/>
</dbReference>
<dbReference type="PIR" id="AI1691">
    <property type="entry name" value="AI1691"/>
</dbReference>
<dbReference type="RefSeq" id="WP_010991739.1">
    <property type="nucleotide sequence ID" value="NC_003212.1"/>
</dbReference>
<dbReference type="SMR" id="Q92A47"/>
<dbReference type="STRING" id="272626.gene:17566433"/>
<dbReference type="KEGG" id="lin:lin2075"/>
<dbReference type="eggNOG" id="COG0492">
    <property type="taxonomic scope" value="Bacteria"/>
</dbReference>
<dbReference type="HOGENOM" id="CLU_031864_5_5_9"/>
<dbReference type="OrthoDB" id="9806179at2"/>
<dbReference type="Proteomes" id="UP000002513">
    <property type="component" value="Chromosome"/>
</dbReference>
<dbReference type="GO" id="GO:0004324">
    <property type="term" value="F:ferredoxin-NADP+ reductase activity"/>
    <property type="evidence" value="ECO:0007669"/>
    <property type="project" value="UniProtKB-UniRule"/>
</dbReference>
<dbReference type="GO" id="GO:0050660">
    <property type="term" value="F:flavin adenine dinucleotide binding"/>
    <property type="evidence" value="ECO:0007669"/>
    <property type="project" value="UniProtKB-UniRule"/>
</dbReference>
<dbReference type="GO" id="GO:0050661">
    <property type="term" value="F:NADP binding"/>
    <property type="evidence" value="ECO:0007669"/>
    <property type="project" value="UniProtKB-UniRule"/>
</dbReference>
<dbReference type="Gene3D" id="3.50.50.60">
    <property type="entry name" value="FAD/NAD(P)-binding domain"/>
    <property type="match status" value="2"/>
</dbReference>
<dbReference type="HAMAP" id="MF_01685">
    <property type="entry name" value="FENR2"/>
    <property type="match status" value="1"/>
</dbReference>
<dbReference type="InterPro" id="IPR036188">
    <property type="entry name" value="FAD/NAD-bd_sf"/>
</dbReference>
<dbReference type="InterPro" id="IPR023753">
    <property type="entry name" value="FAD/NAD-binding_dom"/>
</dbReference>
<dbReference type="InterPro" id="IPR022890">
    <property type="entry name" value="Fd--NADP_Rdtase_type_2"/>
</dbReference>
<dbReference type="InterPro" id="IPR050097">
    <property type="entry name" value="Ferredoxin-NADP_redctase_2"/>
</dbReference>
<dbReference type="PANTHER" id="PTHR48105">
    <property type="entry name" value="THIOREDOXIN REDUCTASE 1-RELATED-RELATED"/>
    <property type="match status" value="1"/>
</dbReference>
<dbReference type="Pfam" id="PF07992">
    <property type="entry name" value="Pyr_redox_2"/>
    <property type="match status" value="1"/>
</dbReference>
<dbReference type="PRINTS" id="PR00368">
    <property type="entry name" value="FADPNR"/>
</dbReference>
<dbReference type="PRINTS" id="PR00469">
    <property type="entry name" value="PNDRDTASEII"/>
</dbReference>
<dbReference type="SUPFAM" id="SSF51905">
    <property type="entry name" value="FAD/NAD(P)-binding domain"/>
    <property type="match status" value="1"/>
</dbReference>
<sequence>MPNEVYDVTIIGGGPIGLFSAFYSGLRSMKTKIIDAEPDVGGKVRYFFPEKIIRDIGGIPAITGANLVANLKEQAETFHPTIVCNERVVDVTKLTDGVFQLTSHNGSIHFSKTVVIATGSGTFEVNKLEAMHVDDFPLAINYDVKNLEQFRDKIVTVSGGGNSAIDWAQTLEPIAKKVHLIYRGEDFKAHEESVRELKNSRVEIHIHHEIKELIGANNQLASIKICCNQTQVTKTIETEALFINHGVKVDLGTMAEWGFELADFGIVVDDEMKTTVPGIFACGDSATYSRKIRIIAAGLHEGPIAINSAKKYLEPTARDEAMISTHHESFIG</sequence>
<name>FENR1_LISIN</name>
<protein>
    <recommendedName>
        <fullName evidence="1">Ferredoxin--NADP reductase 1</fullName>
        <shortName evidence="1">FNR 1</shortName>
        <shortName evidence="1">Fd-NADP(+) reductase 1</shortName>
        <ecNumber evidence="1">1.18.1.2</ecNumber>
    </recommendedName>
</protein>